<organismHost>
    <name type="scientific">Escherichia coli</name>
    <dbReference type="NCBI Taxonomy" id="562"/>
</organismHost>
<dbReference type="EMBL" id="V01146">
    <property type="protein sequence ID" value="CAA24442.1"/>
    <property type="molecule type" value="Genomic_DNA"/>
</dbReference>
<dbReference type="PIR" id="A04415">
    <property type="entry name" value="W9BPC7"/>
</dbReference>
<dbReference type="RefSeq" id="NP_042012.1">
    <property type="nucleotide sequence ID" value="NC_001604.1"/>
</dbReference>
<dbReference type="KEGG" id="vg:1261066"/>
<dbReference type="Proteomes" id="UP000000840">
    <property type="component" value="Genome"/>
</dbReference>
<dbReference type="InterPro" id="IPR035178">
    <property type="entry name" value="DUF5466"/>
</dbReference>
<dbReference type="Pfam" id="PF17554">
    <property type="entry name" value="DUF5466"/>
    <property type="match status" value="1"/>
</dbReference>
<keyword id="KW-1185">Reference proteome</keyword>
<feature type="chain" id="PRO_0000106545" description="Protein 19.3">
    <location>
        <begin position="1"/>
        <end position="57"/>
    </location>
</feature>
<reference key="1">
    <citation type="journal article" date="1983" name="J. Mol. Biol.">
        <title>Complete nucleotide sequence of bacteriophage T7 DNA and the locations of T7 genetic elements.</title>
        <authorList>
            <person name="Dunn J.J."/>
            <person name="Studier F.W."/>
        </authorList>
    </citation>
    <scope>NUCLEOTIDE SEQUENCE [LARGE SCALE GENOMIC DNA]</scope>
</reference>
<proteinExistence type="predicted"/>
<gene>
    <name type="ordered locus">19.3</name>
</gene>
<organism>
    <name type="scientific">Escherichia phage T7</name>
    <name type="common">Bacteriophage T7</name>
    <dbReference type="NCBI Taxonomy" id="10760"/>
    <lineage>
        <taxon>Viruses</taxon>
        <taxon>Duplodnaviria</taxon>
        <taxon>Heunggongvirae</taxon>
        <taxon>Uroviricota</taxon>
        <taxon>Caudoviricetes</taxon>
        <taxon>Autographiviridae</taxon>
        <taxon>Studiervirinae</taxon>
        <taxon>Teseptimavirus</taxon>
        <taxon>Teseptimavirus T7</taxon>
    </lineage>
</organism>
<name>Y193_BPT7</name>
<accession>P03790</accession>
<sequence>MATPIRPLSYSLRRQSNGESRRLSTRVTSVTVCSVRYSVLSFLNTTTVRWKRFVPVV</sequence>
<protein>
    <recommendedName>
        <fullName>Protein 19.3</fullName>
    </recommendedName>
    <alternativeName>
        <fullName>Gene product 19.3</fullName>
        <shortName>Gp19.2</shortName>
    </alternativeName>
</protein>